<comment type="subcellular location">
    <subcellularLocation>
        <location evidence="2">Nucleus</location>
    </subcellularLocation>
</comment>
<comment type="similarity">
    <text evidence="3">Belongs to the CONSTANS family.</text>
</comment>
<comment type="sequence caution" evidence="3">
    <conflict type="erroneous gene model prediction">
        <sequence resource="EMBL-CDS" id="BAB09583"/>
    </conflict>
</comment>
<sequence>MGFGLESIKSISGGWGAAARSCDACKSVTAAVFCRVDSAFLCIACDTRIHSFTRHERVWVCEVCEQAPAAVTCKADAAALCVSCDADIHSANPLASRHERVPVETFFDSAETAVAKISASSTFGILGSSTTVDLTAVPVMADDLGLCPWLLPNDFNEPAKIEIGTENMKGSSDFMFSDFDRLIDFEFPNSFNHHQNNAGGDSLVPVQTKTEPLPLTNNDHCFDIDFCRSKLSAFTYPSQSVSHSVSTSSIEYGVVPDGNTNNSVNRSTITSSTTGGDHQASSMDREARVLRYREKRKNRKFEKTIRYASRKAYAESRPRIKGRFAKRTETENDDIFLSHVYASAAHAQYGVVPTF</sequence>
<reference key="1">
    <citation type="journal article" date="1999" name="DNA Res.">
        <title>Structural analysis of Arabidopsis thaliana chromosome 5. IX. Sequence features of the regions of 1,011,550 bp covered by seventeen P1 and TAC clones.</title>
        <authorList>
            <person name="Kaneko T."/>
            <person name="Katoh T."/>
            <person name="Sato S."/>
            <person name="Nakamura Y."/>
            <person name="Asamizu E."/>
            <person name="Kotani H."/>
            <person name="Miyajima N."/>
            <person name="Tabata S."/>
        </authorList>
    </citation>
    <scope>NUCLEOTIDE SEQUENCE [LARGE SCALE GENOMIC DNA]</scope>
    <source>
        <strain>cv. Columbia</strain>
    </source>
</reference>
<reference key="2">
    <citation type="journal article" date="2017" name="Plant J.">
        <title>Araport11: a complete reannotation of the Arabidopsis thaliana reference genome.</title>
        <authorList>
            <person name="Cheng C.Y."/>
            <person name="Krishnakumar V."/>
            <person name="Chan A.P."/>
            <person name="Thibaud-Nissen F."/>
            <person name="Schobel S."/>
            <person name="Town C.D."/>
        </authorList>
    </citation>
    <scope>GENOME REANNOTATION</scope>
    <source>
        <strain>cv. Columbia</strain>
    </source>
</reference>
<reference key="3">
    <citation type="journal article" date="2003" name="Science">
        <title>Empirical analysis of transcriptional activity in the Arabidopsis genome.</title>
        <authorList>
            <person name="Yamada K."/>
            <person name="Lim J."/>
            <person name="Dale J.M."/>
            <person name="Chen H."/>
            <person name="Shinn P."/>
            <person name="Palm C.J."/>
            <person name="Southwick A.M."/>
            <person name="Wu H.C."/>
            <person name="Kim C.J."/>
            <person name="Nguyen M."/>
            <person name="Pham P.K."/>
            <person name="Cheuk R.F."/>
            <person name="Karlin-Newmann G."/>
            <person name="Liu S.X."/>
            <person name="Lam B."/>
            <person name="Sakano H."/>
            <person name="Wu T."/>
            <person name="Yu G."/>
            <person name="Miranda M."/>
            <person name="Quach H.L."/>
            <person name="Tripp M."/>
            <person name="Chang C.H."/>
            <person name="Lee J.M."/>
            <person name="Toriumi M.J."/>
            <person name="Chan M.M."/>
            <person name="Tang C.C."/>
            <person name="Onodera C.S."/>
            <person name="Deng J.M."/>
            <person name="Akiyama K."/>
            <person name="Ansari Y."/>
            <person name="Arakawa T."/>
            <person name="Banh J."/>
            <person name="Banno F."/>
            <person name="Bowser L."/>
            <person name="Brooks S.Y."/>
            <person name="Carninci P."/>
            <person name="Chao Q."/>
            <person name="Choy N."/>
            <person name="Enju A."/>
            <person name="Goldsmith A.D."/>
            <person name="Gurjal M."/>
            <person name="Hansen N.F."/>
            <person name="Hayashizaki Y."/>
            <person name="Johnson-Hopson C."/>
            <person name="Hsuan V.W."/>
            <person name="Iida K."/>
            <person name="Karnes M."/>
            <person name="Khan S."/>
            <person name="Koesema E."/>
            <person name="Ishida J."/>
            <person name="Jiang P.X."/>
            <person name="Jones T."/>
            <person name="Kawai J."/>
            <person name="Kamiya A."/>
            <person name="Meyers C."/>
            <person name="Nakajima M."/>
            <person name="Narusaka M."/>
            <person name="Seki M."/>
            <person name="Sakurai T."/>
            <person name="Satou M."/>
            <person name="Tamse R."/>
            <person name="Vaysberg M."/>
            <person name="Wallender E.K."/>
            <person name="Wong C."/>
            <person name="Yamamura Y."/>
            <person name="Yuan S."/>
            <person name="Shinozaki K."/>
            <person name="Davis R.W."/>
            <person name="Theologis A."/>
            <person name="Ecker J.R."/>
        </authorList>
    </citation>
    <scope>NUCLEOTIDE SEQUENCE [LARGE SCALE MRNA]</scope>
    <source>
        <strain>cv. Columbia</strain>
    </source>
</reference>
<reference key="4">
    <citation type="submission" date="2002-03" db="EMBL/GenBank/DDBJ databases">
        <title>Full-length cDNA from Arabidopsis thaliana.</title>
        <authorList>
            <person name="Brover V.V."/>
            <person name="Troukhan M.E."/>
            <person name="Alexandrov N.A."/>
            <person name="Lu Y.-P."/>
            <person name="Flavell R.B."/>
            <person name="Feldmann K.A."/>
        </authorList>
    </citation>
    <scope>NUCLEOTIDE SEQUENCE [LARGE SCALE MRNA]</scope>
</reference>
<reference key="5">
    <citation type="journal article" date="2003" name="Plant Physiol.">
        <title>The evolution of CONSTANS-like gene families in barley, rice, and Arabidopsis.</title>
        <authorList>
            <person name="Griffiths S."/>
            <person name="Dunford R.P."/>
            <person name="Coupland G."/>
            <person name="Laurie D.A."/>
        </authorList>
    </citation>
    <scope>GENE FAMILY</scope>
    <scope>NOMENCLATURE</scope>
</reference>
<gene>
    <name type="primary">COL5</name>
    <name type="ordered locus">At5g57660</name>
    <name type="ORF">MRI1.1</name>
</gene>
<evidence type="ECO:0000255" key="1">
    <source>
        <dbReference type="PROSITE-ProRule" id="PRU00024"/>
    </source>
</evidence>
<evidence type="ECO:0000255" key="2">
    <source>
        <dbReference type="PROSITE-ProRule" id="PRU00357"/>
    </source>
</evidence>
<evidence type="ECO:0000305" key="3"/>
<proteinExistence type="evidence at transcript level"/>
<feature type="chain" id="PRO_0000113282" description="Zinc finger protein CONSTANS-LIKE 5">
    <location>
        <begin position="1"/>
        <end position="355"/>
    </location>
</feature>
<feature type="domain" description="CCT" evidence="2">
    <location>
        <begin position="285"/>
        <end position="327"/>
    </location>
</feature>
<feature type="zinc finger region" description="B box-type 1; atypical" evidence="1">
    <location>
        <begin position="22"/>
        <end position="60"/>
    </location>
</feature>
<feature type="zinc finger region" description="B box-type 2; atypical" evidence="1">
    <location>
        <begin position="61"/>
        <end position="103"/>
    </location>
</feature>
<feature type="binding site" evidence="1">
    <location>
        <position position="22"/>
    </location>
    <ligand>
        <name>Zn(2+)</name>
        <dbReference type="ChEBI" id="CHEBI:29105"/>
        <label>1</label>
    </ligand>
</feature>
<feature type="binding site" evidence="1">
    <location>
        <position position="25"/>
    </location>
    <ligand>
        <name>Zn(2+)</name>
        <dbReference type="ChEBI" id="CHEBI:29105"/>
        <label>1</label>
    </ligand>
</feature>
<feature type="binding site" evidence="1">
    <location>
        <position position="45"/>
    </location>
    <ligand>
        <name>Zn(2+)</name>
        <dbReference type="ChEBI" id="CHEBI:29105"/>
        <label>1</label>
    </ligand>
</feature>
<feature type="binding site" evidence="1">
    <location>
        <position position="50"/>
    </location>
    <ligand>
        <name>Zn(2+)</name>
        <dbReference type="ChEBI" id="CHEBI:29105"/>
        <label>1</label>
    </ligand>
</feature>
<feature type="binding site" evidence="1">
    <location>
        <position position="61"/>
    </location>
    <ligand>
        <name>Zn(2+)</name>
        <dbReference type="ChEBI" id="CHEBI:29105"/>
        <label>2</label>
    </ligand>
</feature>
<feature type="binding site" evidence="1">
    <location>
        <position position="64"/>
    </location>
    <ligand>
        <name>Zn(2+)</name>
        <dbReference type="ChEBI" id="CHEBI:29105"/>
        <label>2</label>
    </ligand>
</feature>
<feature type="binding site" evidence="1">
    <location>
        <position position="84"/>
    </location>
    <ligand>
        <name>Zn(2+)</name>
        <dbReference type="ChEBI" id="CHEBI:29105"/>
        <label>2</label>
    </ligand>
</feature>
<feature type="binding site" evidence="1">
    <location>
        <position position="89"/>
    </location>
    <ligand>
        <name>Zn(2+)</name>
        <dbReference type="ChEBI" id="CHEBI:29105"/>
        <label>2</label>
    </ligand>
</feature>
<feature type="sequence conflict" description="In Ref. 4; AAM65968." evidence="3" ref="4">
    <original>S</original>
    <variation>T</variation>
    <location>
        <position position="83"/>
    </location>
</feature>
<organism>
    <name type="scientific">Arabidopsis thaliana</name>
    <name type="common">Mouse-ear cress</name>
    <dbReference type="NCBI Taxonomy" id="3702"/>
    <lineage>
        <taxon>Eukaryota</taxon>
        <taxon>Viridiplantae</taxon>
        <taxon>Streptophyta</taxon>
        <taxon>Embryophyta</taxon>
        <taxon>Tracheophyta</taxon>
        <taxon>Spermatophyta</taxon>
        <taxon>Magnoliopsida</taxon>
        <taxon>eudicotyledons</taxon>
        <taxon>Gunneridae</taxon>
        <taxon>Pentapetalae</taxon>
        <taxon>rosids</taxon>
        <taxon>malvids</taxon>
        <taxon>Brassicales</taxon>
        <taxon>Brassicaceae</taxon>
        <taxon>Camelineae</taxon>
        <taxon>Arabidopsis</taxon>
    </lineage>
</organism>
<protein>
    <recommendedName>
        <fullName>Zinc finger protein CONSTANS-LIKE 5</fullName>
    </recommendedName>
</protein>
<name>COL5_ARATH</name>
<dbReference type="EMBL" id="AB018118">
    <property type="protein sequence ID" value="BAB09583.1"/>
    <property type="status" value="ALT_SEQ"/>
    <property type="molecule type" value="Genomic_DNA"/>
</dbReference>
<dbReference type="EMBL" id="CP002688">
    <property type="protein sequence ID" value="AED96933.1"/>
    <property type="molecule type" value="Genomic_DNA"/>
</dbReference>
<dbReference type="EMBL" id="AY057632">
    <property type="protein sequence ID" value="AAL15263.1"/>
    <property type="molecule type" value="mRNA"/>
</dbReference>
<dbReference type="EMBL" id="AY080747">
    <property type="protein sequence ID" value="AAL85993.1"/>
    <property type="molecule type" value="mRNA"/>
</dbReference>
<dbReference type="EMBL" id="AY114006">
    <property type="protein sequence ID" value="AAM45054.1"/>
    <property type="molecule type" value="mRNA"/>
</dbReference>
<dbReference type="EMBL" id="AY088432">
    <property type="protein sequence ID" value="AAM65968.1"/>
    <property type="molecule type" value="mRNA"/>
</dbReference>
<dbReference type="RefSeq" id="NP_568863.1">
    <property type="nucleotide sequence ID" value="NM_125149.3"/>
</dbReference>
<dbReference type="SMR" id="Q9FHH8"/>
<dbReference type="BioGRID" id="21116">
    <property type="interactions" value="8"/>
</dbReference>
<dbReference type="FunCoup" id="Q9FHH8">
    <property type="interactions" value="34"/>
</dbReference>
<dbReference type="IntAct" id="Q9FHH8">
    <property type="interactions" value="3"/>
</dbReference>
<dbReference type="STRING" id="3702.Q9FHH8"/>
<dbReference type="PaxDb" id="3702-AT5G57660.1"/>
<dbReference type="ProteomicsDB" id="241149"/>
<dbReference type="EnsemblPlants" id="AT5G57660.1">
    <property type="protein sequence ID" value="AT5G57660.1"/>
    <property type="gene ID" value="AT5G57660"/>
</dbReference>
<dbReference type="GeneID" id="835872"/>
<dbReference type="Gramene" id="AT5G57660.1">
    <property type="protein sequence ID" value="AT5G57660.1"/>
    <property type="gene ID" value="AT5G57660"/>
</dbReference>
<dbReference type="KEGG" id="ath:AT5G57660"/>
<dbReference type="Araport" id="AT5G57660"/>
<dbReference type="TAIR" id="AT5G57660">
    <property type="gene designation" value="COL5"/>
</dbReference>
<dbReference type="eggNOG" id="KOG1601">
    <property type="taxonomic scope" value="Eukaryota"/>
</dbReference>
<dbReference type="HOGENOM" id="CLU_028225_3_2_1"/>
<dbReference type="InParanoid" id="Q9FHH8"/>
<dbReference type="OMA" id="SKIHCAN"/>
<dbReference type="PhylomeDB" id="Q9FHH8"/>
<dbReference type="PRO" id="PR:Q9FHH8"/>
<dbReference type="Proteomes" id="UP000006548">
    <property type="component" value="Chromosome 5"/>
</dbReference>
<dbReference type="ExpressionAtlas" id="Q9FHH8">
    <property type="expression patterns" value="baseline and differential"/>
</dbReference>
<dbReference type="GO" id="GO:0005634">
    <property type="term" value="C:nucleus"/>
    <property type="evidence" value="ECO:0007669"/>
    <property type="project" value="UniProtKB-SubCell"/>
</dbReference>
<dbReference type="GO" id="GO:0003700">
    <property type="term" value="F:DNA-binding transcription factor activity"/>
    <property type="evidence" value="ECO:0000250"/>
    <property type="project" value="TAIR"/>
</dbReference>
<dbReference type="GO" id="GO:0000976">
    <property type="term" value="F:transcription cis-regulatory region binding"/>
    <property type="evidence" value="ECO:0000353"/>
    <property type="project" value="TAIR"/>
</dbReference>
<dbReference type="GO" id="GO:0008270">
    <property type="term" value="F:zinc ion binding"/>
    <property type="evidence" value="ECO:0007669"/>
    <property type="project" value="UniProtKB-KW"/>
</dbReference>
<dbReference type="GO" id="GO:0006355">
    <property type="term" value="P:regulation of DNA-templated transcription"/>
    <property type="evidence" value="ECO:0000304"/>
    <property type="project" value="TAIR"/>
</dbReference>
<dbReference type="GO" id="GO:0009909">
    <property type="term" value="P:regulation of flower development"/>
    <property type="evidence" value="ECO:0007669"/>
    <property type="project" value="InterPro"/>
</dbReference>
<dbReference type="CDD" id="cd19821">
    <property type="entry name" value="Bbox1_BBX-like"/>
    <property type="match status" value="2"/>
</dbReference>
<dbReference type="InterPro" id="IPR010402">
    <property type="entry name" value="CCT_domain"/>
</dbReference>
<dbReference type="InterPro" id="IPR045281">
    <property type="entry name" value="CONSTANS-like"/>
</dbReference>
<dbReference type="InterPro" id="IPR049808">
    <property type="entry name" value="CONSTANS-like_Bbox1"/>
</dbReference>
<dbReference type="InterPro" id="IPR000315">
    <property type="entry name" value="Znf_B-box"/>
</dbReference>
<dbReference type="PANTHER" id="PTHR31319">
    <property type="entry name" value="ZINC FINGER PROTEIN CONSTANS-LIKE 4"/>
    <property type="match status" value="1"/>
</dbReference>
<dbReference type="PANTHER" id="PTHR31319:SF53">
    <property type="entry name" value="ZINC FINGER PROTEIN CONSTANS-LIKE 5"/>
    <property type="match status" value="1"/>
</dbReference>
<dbReference type="Pfam" id="PF06203">
    <property type="entry name" value="CCT"/>
    <property type="match status" value="1"/>
</dbReference>
<dbReference type="Pfam" id="PF00643">
    <property type="entry name" value="zf-B_box"/>
    <property type="match status" value="1"/>
</dbReference>
<dbReference type="SMART" id="SM00336">
    <property type="entry name" value="BBOX"/>
    <property type="match status" value="2"/>
</dbReference>
<dbReference type="PROSITE" id="PS51017">
    <property type="entry name" value="CCT"/>
    <property type="match status" value="1"/>
</dbReference>
<dbReference type="PROSITE" id="PS50119">
    <property type="entry name" value="ZF_BBOX"/>
    <property type="match status" value="2"/>
</dbReference>
<accession>Q9FHH8</accession>
<accession>Q8L9H4</accession>
<accession>Q93ZC8</accession>
<keyword id="KW-0479">Metal-binding</keyword>
<keyword id="KW-0539">Nucleus</keyword>
<keyword id="KW-1185">Reference proteome</keyword>
<keyword id="KW-0677">Repeat</keyword>
<keyword id="KW-0862">Zinc</keyword>
<keyword id="KW-0863">Zinc-finger</keyword>